<protein>
    <recommendedName>
        <fullName>Insertion element IS600 uncharacterized 11 kDa protein</fullName>
    </recommendedName>
    <alternativeName>
        <fullName>ISO-S3 11 kDa protein</fullName>
    </alternativeName>
</protein>
<name>YIS1_SHISO</name>
<keyword id="KW-0814">Transposable element</keyword>
<comment type="similarity">
    <text evidence="1">Belongs to the transposase 8 family.</text>
</comment>
<organism>
    <name type="scientific">Shigella sonnei</name>
    <dbReference type="NCBI Taxonomy" id="624"/>
    <lineage>
        <taxon>Bacteria</taxon>
        <taxon>Pseudomonadati</taxon>
        <taxon>Pseudomonadota</taxon>
        <taxon>Gammaproteobacteria</taxon>
        <taxon>Enterobacterales</taxon>
        <taxon>Enterobacteriaceae</taxon>
        <taxon>Shigella</taxon>
    </lineage>
</organism>
<proteinExistence type="inferred from homology"/>
<dbReference type="EMBL" id="X05952">
    <property type="protein sequence ID" value="CAA29384.1"/>
    <property type="molecule type" value="Genomic_DNA"/>
</dbReference>
<dbReference type="PIR" id="S03411">
    <property type="entry name" value="S03411"/>
</dbReference>
<dbReference type="RefSeq" id="WP_004991942.1">
    <property type="nucleotide sequence ID" value="NZ_JTBL02000002.1"/>
</dbReference>
<dbReference type="SMR" id="P16939"/>
<dbReference type="STRING" id="216599.GCA_000283715_00442"/>
<dbReference type="OMA" id="FWVKESS"/>
<dbReference type="GO" id="GO:0003677">
    <property type="term" value="F:DNA binding"/>
    <property type="evidence" value="ECO:0007669"/>
    <property type="project" value="InterPro"/>
</dbReference>
<dbReference type="GO" id="GO:0004803">
    <property type="term" value="F:transposase activity"/>
    <property type="evidence" value="ECO:0007669"/>
    <property type="project" value="InterPro"/>
</dbReference>
<dbReference type="GO" id="GO:0006313">
    <property type="term" value="P:DNA transposition"/>
    <property type="evidence" value="ECO:0007669"/>
    <property type="project" value="InterPro"/>
</dbReference>
<dbReference type="Gene3D" id="1.10.10.10">
    <property type="entry name" value="Winged helix-like DNA-binding domain superfamily/Winged helix DNA-binding domain"/>
    <property type="match status" value="1"/>
</dbReference>
<dbReference type="InterPro" id="IPR009057">
    <property type="entry name" value="Homeodomain-like_sf"/>
</dbReference>
<dbReference type="InterPro" id="IPR051839">
    <property type="entry name" value="RD_transcriptional_regulator"/>
</dbReference>
<dbReference type="InterPro" id="IPR002514">
    <property type="entry name" value="Transposase_8"/>
</dbReference>
<dbReference type="InterPro" id="IPR036388">
    <property type="entry name" value="WH-like_DNA-bd_sf"/>
</dbReference>
<dbReference type="PANTHER" id="PTHR33215">
    <property type="entry name" value="PROTEIN DISTAL ANTENNA"/>
    <property type="match status" value="1"/>
</dbReference>
<dbReference type="PANTHER" id="PTHR33215:SF13">
    <property type="entry name" value="PROTEIN DISTAL ANTENNA"/>
    <property type="match status" value="1"/>
</dbReference>
<dbReference type="Pfam" id="PF01527">
    <property type="entry name" value="HTH_Tnp_1"/>
    <property type="match status" value="1"/>
</dbReference>
<dbReference type="SUPFAM" id="SSF46689">
    <property type="entry name" value="Homeodomain-like"/>
    <property type="match status" value="1"/>
</dbReference>
<reference key="1">
    <citation type="journal article" date="1987" name="J. Mol. Biol.">
        <title>Isolation and characterization of IS elements repeated in the bacterial chromosome.</title>
        <authorList>
            <person name="Matsutani S."/>
            <person name="Ohtsubo H."/>
            <person name="Maeda Y."/>
            <person name="Ohtsubo E."/>
        </authorList>
    </citation>
    <scope>NUCLEOTIDE SEQUENCE [GENOMIC DNA]</scope>
</reference>
<evidence type="ECO:0000305" key="1"/>
<sequence length="100" mass="11164">MSRKTQRYSKEFKAEAVRTVPENQLSISEGASRLSLPEGTLGQWVTAARKGLGTPGSRTVAELESEILQLRKALNEARLERDILKKATAYFAQESLKNTR</sequence>
<feature type="chain" id="PRO_0000075500" description="Insertion element IS600 uncharacterized 11 kDa protein">
    <location>
        <begin position="1"/>
        <end position="100"/>
    </location>
</feature>
<accession>P16939</accession>